<name>ATPD_RHIME</name>
<sequence length="188" mass="19882">MPVADTSQLISGVAERYASSLFELALDAGSIEAVGADLTRIQALIDGSDDLKRLIVSPVFSADDQFKAISALVEKFGFSGLVGNFLKVVARNRRLFVLPGIIKAFRLLAARHKGEITADVTSAHALTLAQEIELKAALKGVTGKDVAVNVTVDPSILGGLIVKVGSRQIDTSLRTKLSTLKLALKEVG</sequence>
<evidence type="ECO:0000255" key="1">
    <source>
        <dbReference type="HAMAP-Rule" id="MF_01416"/>
    </source>
</evidence>
<gene>
    <name evidence="1" type="primary">atpH</name>
    <name type="ordered locus">R03037</name>
    <name type="ORF">SMc02498</name>
</gene>
<feature type="chain" id="PRO_0000371093" description="ATP synthase subunit delta">
    <location>
        <begin position="1"/>
        <end position="188"/>
    </location>
</feature>
<organism>
    <name type="scientific">Rhizobium meliloti (strain 1021)</name>
    <name type="common">Ensifer meliloti</name>
    <name type="synonym">Sinorhizobium meliloti</name>
    <dbReference type="NCBI Taxonomy" id="266834"/>
    <lineage>
        <taxon>Bacteria</taxon>
        <taxon>Pseudomonadati</taxon>
        <taxon>Pseudomonadota</taxon>
        <taxon>Alphaproteobacteria</taxon>
        <taxon>Hyphomicrobiales</taxon>
        <taxon>Rhizobiaceae</taxon>
        <taxon>Sinorhizobium/Ensifer group</taxon>
        <taxon>Sinorhizobium</taxon>
    </lineage>
</organism>
<protein>
    <recommendedName>
        <fullName evidence="1">ATP synthase subunit delta</fullName>
    </recommendedName>
    <alternativeName>
        <fullName evidence="1">ATP synthase F(1) sector subunit delta</fullName>
    </alternativeName>
    <alternativeName>
        <fullName evidence="1">F-type ATPase subunit delta</fullName>
        <shortName evidence="1">F-ATPase subunit delta</shortName>
    </alternativeName>
</protein>
<comment type="function">
    <text evidence="1">F(1)F(0) ATP synthase produces ATP from ADP in the presence of a proton or sodium gradient. F-type ATPases consist of two structural domains, F(1) containing the extramembraneous catalytic core and F(0) containing the membrane proton channel, linked together by a central stalk and a peripheral stalk. During catalysis, ATP synthesis in the catalytic domain of F(1) is coupled via a rotary mechanism of the central stalk subunits to proton translocation.</text>
</comment>
<comment type="function">
    <text evidence="1">This protein is part of the stalk that links CF(0) to CF(1). It either transmits conformational changes from CF(0) to CF(1) or is implicated in proton conduction.</text>
</comment>
<comment type="subunit">
    <text evidence="1">F-type ATPases have 2 components, F(1) - the catalytic core - and F(0) - the membrane proton channel. F(1) has five subunits: alpha(3), beta(3), gamma(1), delta(1), epsilon(1). F(0) has three main subunits: a(1), b(2) and c(10-14). The alpha and beta chains form an alternating ring which encloses part of the gamma chain. F(1) is attached to F(0) by a central stalk formed by the gamma and epsilon chains, while a peripheral stalk is formed by the delta and b chains.</text>
</comment>
<comment type="subcellular location">
    <subcellularLocation>
        <location evidence="1">Cell inner membrane</location>
        <topology evidence="1">Peripheral membrane protein</topology>
    </subcellularLocation>
</comment>
<comment type="similarity">
    <text evidence="1">Belongs to the ATPase delta chain family.</text>
</comment>
<reference key="1">
    <citation type="journal article" date="2001" name="Proc. Natl. Acad. Sci. U.S.A.">
        <title>Analysis of the chromosome sequence of the legume symbiont Sinorhizobium meliloti strain 1021.</title>
        <authorList>
            <person name="Capela D."/>
            <person name="Barloy-Hubler F."/>
            <person name="Gouzy J."/>
            <person name="Bothe G."/>
            <person name="Ampe F."/>
            <person name="Batut J."/>
            <person name="Boistard P."/>
            <person name="Becker A."/>
            <person name="Boutry M."/>
            <person name="Cadieu E."/>
            <person name="Dreano S."/>
            <person name="Gloux S."/>
            <person name="Godrie T."/>
            <person name="Goffeau A."/>
            <person name="Kahn D."/>
            <person name="Kiss E."/>
            <person name="Lelaure V."/>
            <person name="Masuy D."/>
            <person name="Pohl T."/>
            <person name="Portetelle D."/>
            <person name="Puehler A."/>
            <person name="Purnelle B."/>
            <person name="Ramsperger U."/>
            <person name="Renard C."/>
            <person name="Thebault P."/>
            <person name="Vandenbol M."/>
            <person name="Weidner S."/>
            <person name="Galibert F."/>
        </authorList>
    </citation>
    <scope>NUCLEOTIDE SEQUENCE [LARGE SCALE GENOMIC DNA]</scope>
    <source>
        <strain>1021</strain>
    </source>
</reference>
<reference key="2">
    <citation type="journal article" date="2001" name="Science">
        <title>The composite genome of the legume symbiont Sinorhizobium meliloti.</title>
        <authorList>
            <person name="Galibert F."/>
            <person name="Finan T.M."/>
            <person name="Long S.R."/>
            <person name="Puehler A."/>
            <person name="Abola P."/>
            <person name="Ampe F."/>
            <person name="Barloy-Hubler F."/>
            <person name="Barnett M.J."/>
            <person name="Becker A."/>
            <person name="Boistard P."/>
            <person name="Bothe G."/>
            <person name="Boutry M."/>
            <person name="Bowser L."/>
            <person name="Buhrmester J."/>
            <person name="Cadieu E."/>
            <person name="Capela D."/>
            <person name="Chain P."/>
            <person name="Cowie A."/>
            <person name="Davis R.W."/>
            <person name="Dreano S."/>
            <person name="Federspiel N.A."/>
            <person name="Fisher R.F."/>
            <person name="Gloux S."/>
            <person name="Godrie T."/>
            <person name="Goffeau A."/>
            <person name="Golding B."/>
            <person name="Gouzy J."/>
            <person name="Gurjal M."/>
            <person name="Hernandez-Lucas I."/>
            <person name="Hong A."/>
            <person name="Huizar L."/>
            <person name="Hyman R.W."/>
            <person name="Jones T."/>
            <person name="Kahn D."/>
            <person name="Kahn M.L."/>
            <person name="Kalman S."/>
            <person name="Keating D.H."/>
            <person name="Kiss E."/>
            <person name="Komp C."/>
            <person name="Lelaure V."/>
            <person name="Masuy D."/>
            <person name="Palm C."/>
            <person name="Peck M.C."/>
            <person name="Pohl T.M."/>
            <person name="Portetelle D."/>
            <person name="Purnelle B."/>
            <person name="Ramsperger U."/>
            <person name="Surzycki R."/>
            <person name="Thebault P."/>
            <person name="Vandenbol M."/>
            <person name="Vorhoelter F.J."/>
            <person name="Weidner S."/>
            <person name="Wells D.H."/>
            <person name="Wong K."/>
            <person name="Yeh K.-C."/>
            <person name="Batut J."/>
        </authorList>
    </citation>
    <scope>NUCLEOTIDE SEQUENCE [LARGE SCALE GENOMIC DNA]</scope>
    <source>
        <strain>1021</strain>
    </source>
</reference>
<dbReference type="EMBL" id="AL591688">
    <property type="protein sequence ID" value="CAC47616.2"/>
    <property type="molecule type" value="Genomic_DNA"/>
</dbReference>
<dbReference type="RefSeq" id="NP_387143.2">
    <property type="nucleotide sequence ID" value="NC_003047.1"/>
</dbReference>
<dbReference type="RefSeq" id="WP_010970368.1">
    <property type="nucleotide sequence ID" value="NC_003047.1"/>
</dbReference>
<dbReference type="SMR" id="Q92LK5"/>
<dbReference type="EnsemblBacteria" id="CAC47616">
    <property type="protein sequence ID" value="CAC47616"/>
    <property type="gene ID" value="SMc02498"/>
</dbReference>
<dbReference type="KEGG" id="sme:SMc02498"/>
<dbReference type="PATRIC" id="fig|266834.11.peg.4570"/>
<dbReference type="eggNOG" id="COG0712">
    <property type="taxonomic scope" value="Bacteria"/>
</dbReference>
<dbReference type="HOGENOM" id="CLU_085114_0_1_5"/>
<dbReference type="OrthoDB" id="9796185at2"/>
<dbReference type="Proteomes" id="UP000001976">
    <property type="component" value="Chromosome"/>
</dbReference>
<dbReference type="GO" id="GO:0005886">
    <property type="term" value="C:plasma membrane"/>
    <property type="evidence" value="ECO:0007669"/>
    <property type="project" value="UniProtKB-SubCell"/>
</dbReference>
<dbReference type="GO" id="GO:0045259">
    <property type="term" value="C:proton-transporting ATP synthase complex"/>
    <property type="evidence" value="ECO:0007669"/>
    <property type="project" value="UniProtKB-KW"/>
</dbReference>
<dbReference type="GO" id="GO:0046933">
    <property type="term" value="F:proton-transporting ATP synthase activity, rotational mechanism"/>
    <property type="evidence" value="ECO:0007669"/>
    <property type="project" value="UniProtKB-UniRule"/>
</dbReference>
<dbReference type="Gene3D" id="1.10.520.20">
    <property type="entry name" value="N-terminal domain of the delta subunit of the F1F0-ATP synthase"/>
    <property type="match status" value="1"/>
</dbReference>
<dbReference type="HAMAP" id="MF_01416">
    <property type="entry name" value="ATP_synth_delta_bact"/>
    <property type="match status" value="1"/>
</dbReference>
<dbReference type="InterPro" id="IPR026015">
    <property type="entry name" value="ATP_synth_OSCP/delta_N_sf"/>
</dbReference>
<dbReference type="InterPro" id="IPR020781">
    <property type="entry name" value="ATPase_OSCP/d_CS"/>
</dbReference>
<dbReference type="InterPro" id="IPR000711">
    <property type="entry name" value="ATPase_OSCP/dsu"/>
</dbReference>
<dbReference type="NCBIfam" id="TIGR01145">
    <property type="entry name" value="ATP_synt_delta"/>
    <property type="match status" value="1"/>
</dbReference>
<dbReference type="NCBIfam" id="NF004406">
    <property type="entry name" value="PRK05758.3-2"/>
    <property type="match status" value="1"/>
</dbReference>
<dbReference type="PANTHER" id="PTHR11910">
    <property type="entry name" value="ATP SYNTHASE DELTA CHAIN"/>
    <property type="match status" value="1"/>
</dbReference>
<dbReference type="Pfam" id="PF00213">
    <property type="entry name" value="OSCP"/>
    <property type="match status" value="1"/>
</dbReference>
<dbReference type="PRINTS" id="PR00125">
    <property type="entry name" value="ATPASEDELTA"/>
</dbReference>
<dbReference type="SUPFAM" id="SSF47928">
    <property type="entry name" value="N-terminal domain of the delta subunit of the F1F0-ATP synthase"/>
    <property type="match status" value="1"/>
</dbReference>
<dbReference type="PROSITE" id="PS00389">
    <property type="entry name" value="ATPASE_DELTA"/>
    <property type="match status" value="1"/>
</dbReference>
<accession>Q92LK5</accession>
<keyword id="KW-0066">ATP synthesis</keyword>
<keyword id="KW-0997">Cell inner membrane</keyword>
<keyword id="KW-1003">Cell membrane</keyword>
<keyword id="KW-0139">CF(1)</keyword>
<keyword id="KW-0375">Hydrogen ion transport</keyword>
<keyword id="KW-0406">Ion transport</keyword>
<keyword id="KW-0472">Membrane</keyword>
<keyword id="KW-1185">Reference proteome</keyword>
<keyword id="KW-0813">Transport</keyword>
<proteinExistence type="inferred from homology"/>